<name>PCYA_SYNS9</name>
<protein>
    <recommendedName>
        <fullName evidence="1">Phycocyanobilin:ferredoxin oxidoreductase</fullName>
        <ecNumber evidence="1">1.3.7.5</ecNumber>
    </recommendedName>
</protein>
<reference key="1">
    <citation type="submission" date="2005-08" db="EMBL/GenBank/DDBJ databases">
        <title>Complete sequence of Synechococcus sp. CC9902.</title>
        <authorList>
            <person name="Copeland A."/>
            <person name="Lucas S."/>
            <person name="Lapidus A."/>
            <person name="Barry K."/>
            <person name="Detter J.C."/>
            <person name="Glavina T."/>
            <person name="Hammon N."/>
            <person name="Israni S."/>
            <person name="Pitluck S."/>
            <person name="Martinez M."/>
            <person name="Schmutz J."/>
            <person name="Larimer F."/>
            <person name="Land M."/>
            <person name="Kyrpides N."/>
            <person name="Ivanova N."/>
            <person name="Richardson P."/>
        </authorList>
    </citation>
    <scope>NUCLEOTIDE SEQUENCE [LARGE SCALE GENOMIC DNA]</scope>
    <source>
        <strain>CC9902</strain>
    </source>
</reference>
<sequence length="246" mass="27464">MQPQSKDPCQELHPLVSTLAASIRSSWQKLPELAPLCTADDLKAIHGELDGETLFIGNELYQCRGFRKIHLEIARLGNGLQILHCVWFPDPQYDLPIFGADIVAGPAGISAAIVDLSPTSGELPDPVFKGLEAIERPAFRQVRDLPGWGTIFSSKVCFIRPDGADEEALFNQVVIDYLEVLSDCASRANPESPTTVSTINRYEGQLNYCLQQKRNDKTRRVLEKAFDPEWADRYIELLLFDNPPTP</sequence>
<feature type="chain" id="PRO_1000061377" description="Phycocyanobilin:ferredoxin oxidoreductase">
    <location>
        <begin position="1"/>
        <end position="246"/>
    </location>
</feature>
<accession>Q3AXI3</accession>
<organism>
    <name type="scientific">Synechococcus sp. (strain CC9902)</name>
    <dbReference type="NCBI Taxonomy" id="316279"/>
    <lineage>
        <taxon>Bacteria</taxon>
        <taxon>Bacillati</taxon>
        <taxon>Cyanobacteriota</taxon>
        <taxon>Cyanophyceae</taxon>
        <taxon>Synechococcales</taxon>
        <taxon>Synechococcaceae</taxon>
        <taxon>Synechococcus</taxon>
    </lineage>
</organism>
<dbReference type="EC" id="1.3.7.5" evidence="1"/>
<dbReference type="EMBL" id="CP000097">
    <property type="protein sequence ID" value="ABB26217.1"/>
    <property type="molecule type" value="Genomic_DNA"/>
</dbReference>
<dbReference type="RefSeq" id="WP_011360042.1">
    <property type="nucleotide sequence ID" value="NC_007513.1"/>
</dbReference>
<dbReference type="SMR" id="Q3AXI3"/>
<dbReference type="STRING" id="316279.Syncc9902_1253"/>
<dbReference type="KEGG" id="sye:Syncc9902_1253"/>
<dbReference type="eggNOG" id="ENOG502Z7RN">
    <property type="taxonomic scope" value="Bacteria"/>
</dbReference>
<dbReference type="HOGENOM" id="CLU_074224_0_0_3"/>
<dbReference type="OrthoDB" id="581340at2"/>
<dbReference type="Proteomes" id="UP000002712">
    <property type="component" value="Chromosome"/>
</dbReference>
<dbReference type="GO" id="GO:0050897">
    <property type="term" value="F:cobalt ion binding"/>
    <property type="evidence" value="ECO:0007669"/>
    <property type="project" value="InterPro"/>
</dbReference>
<dbReference type="GO" id="GO:0050620">
    <property type="term" value="F:phycocyanobilin:ferredoxin oxidoreductase activity"/>
    <property type="evidence" value="ECO:0007669"/>
    <property type="project" value="UniProtKB-UniRule"/>
</dbReference>
<dbReference type="GO" id="GO:0010024">
    <property type="term" value="P:phytochromobilin biosynthetic process"/>
    <property type="evidence" value="ECO:0007669"/>
    <property type="project" value="InterPro"/>
</dbReference>
<dbReference type="Gene3D" id="3.40.1500.20">
    <property type="match status" value="1"/>
</dbReference>
<dbReference type="HAMAP" id="MF_00618">
    <property type="entry name" value="Ferredoxin_bilin_red"/>
    <property type="match status" value="1"/>
</dbReference>
<dbReference type="InterPro" id="IPR009249">
    <property type="entry name" value="Ferredoxin-dep_bilin_Rdtase"/>
</dbReference>
<dbReference type="InterPro" id="IPR022870">
    <property type="entry name" value="Ferredoxin_bilin_OxRdtase"/>
</dbReference>
<dbReference type="NCBIfam" id="NF002760">
    <property type="entry name" value="PRK02816.1"/>
    <property type="match status" value="1"/>
</dbReference>
<dbReference type="PANTHER" id="PTHR34557">
    <property type="entry name" value="PHYTOCHROMOBILIN:FERREDOXIN OXIDOREDUCTASE, CHLOROPLASTIC"/>
    <property type="match status" value="1"/>
</dbReference>
<dbReference type="PANTHER" id="PTHR34557:SF1">
    <property type="entry name" value="PHYTOCHROMOBILIN:FERREDOXIN OXIDOREDUCTASE, CHLOROPLASTIC"/>
    <property type="match status" value="1"/>
</dbReference>
<dbReference type="Pfam" id="PF05996">
    <property type="entry name" value="Fe_bilin_red"/>
    <property type="match status" value="1"/>
</dbReference>
<gene>
    <name evidence="1" type="primary">pcyA</name>
    <name type="ordered locus">Syncc9902_1253</name>
</gene>
<keyword id="KW-0560">Oxidoreductase</keyword>
<keyword id="KW-1185">Reference proteome</keyword>
<proteinExistence type="inferred from homology"/>
<comment type="function">
    <text evidence="1">Catalyzes the four-electron reduction of biliverdin IX-alpha (2-electron reduction at both the A and D rings); the reaction proceeds via an isolatable 2-electron intermediate, 181,182-dihydrobiliverdin.</text>
</comment>
<comment type="catalytic activity">
    <reaction evidence="1">
        <text>(2R,3Z)-phycocyanobilin + 4 oxidized [2Fe-2S]-[ferredoxin] = biliverdin IXalpha + 4 reduced [2Fe-2S]-[ferredoxin] + 4 H(+)</text>
        <dbReference type="Rhea" id="RHEA:15309"/>
        <dbReference type="Rhea" id="RHEA-COMP:10000"/>
        <dbReference type="Rhea" id="RHEA-COMP:10001"/>
        <dbReference type="ChEBI" id="CHEBI:15378"/>
        <dbReference type="ChEBI" id="CHEBI:33737"/>
        <dbReference type="ChEBI" id="CHEBI:33738"/>
        <dbReference type="ChEBI" id="CHEBI:57437"/>
        <dbReference type="ChEBI" id="CHEBI:57991"/>
        <dbReference type="EC" id="1.3.7.5"/>
    </reaction>
</comment>
<comment type="similarity">
    <text evidence="1">Belongs to the HY2 family.</text>
</comment>
<evidence type="ECO:0000255" key="1">
    <source>
        <dbReference type="HAMAP-Rule" id="MF_00618"/>
    </source>
</evidence>